<organism>
    <name type="scientific">Nostoc sp. (strain PCC 7120 / SAG 25.82 / UTEX 2576)</name>
    <dbReference type="NCBI Taxonomy" id="103690"/>
    <lineage>
        <taxon>Bacteria</taxon>
        <taxon>Bacillati</taxon>
        <taxon>Cyanobacteriota</taxon>
        <taxon>Cyanophyceae</taxon>
        <taxon>Nostocales</taxon>
        <taxon>Nostocaceae</taxon>
        <taxon>Nostoc</taxon>
    </lineage>
</organism>
<accession>Q8YZP7</accession>
<dbReference type="EC" id="4.2.1.20"/>
<dbReference type="EMBL" id="BA000019">
    <property type="protein sequence ID" value="BAB72368.1"/>
    <property type="molecule type" value="Genomic_DNA"/>
</dbReference>
<dbReference type="PIR" id="AI1857">
    <property type="entry name" value="AI1857"/>
</dbReference>
<dbReference type="SMR" id="Q8YZP7"/>
<dbReference type="STRING" id="103690.gene:10492419"/>
<dbReference type="KEGG" id="ana:all0410"/>
<dbReference type="eggNOG" id="COG0133">
    <property type="taxonomic scope" value="Bacteria"/>
</dbReference>
<dbReference type="OrthoDB" id="9766131at2"/>
<dbReference type="UniPathway" id="UPA00035">
    <property type="reaction ID" value="UER00044"/>
</dbReference>
<dbReference type="Proteomes" id="UP000002483">
    <property type="component" value="Chromosome"/>
</dbReference>
<dbReference type="GO" id="GO:0005737">
    <property type="term" value="C:cytoplasm"/>
    <property type="evidence" value="ECO:0007669"/>
    <property type="project" value="TreeGrafter"/>
</dbReference>
<dbReference type="GO" id="GO:0004834">
    <property type="term" value="F:tryptophan synthase activity"/>
    <property type="evidence" value="ECO:0007669"/>
    <property type="project" value="UniProtKB-UniRule"/>
</dbReference>
<dbReference type="CDD" id="cd06446">
    <property type="entry name" value="Trp-synth_B"/>
    <property type="match status" value="1"/>
</dbReference>
<dbReference type="FunFam" id="3.40.50.1100:FF:000001">
    <property type="entry name" value="Tryptophan synthase beta chain"/>
    <property type="match status" value="1"/>
</dbReference>
<dbReference type="FunFam" id="3.40.50.1100:FF:000004">
    <property type="entry name" value="Tryptophan synthase beta chain"/>
    <property type="match status" value="1"/>
</dbReference>
<dbReference type="Gene3D" id="3.40.50.1100">
    <property type="match status" value="2"/>
</dbReference>
<dbReference type="HAMAP" id="MF_00133">
    <property type="entry name" value="Trp_synth_beta"/>
    <property type="match status" value="1"/>
</dbReference>
<dbReference type="InterPro" id="IPR006653">
    <property type="entry name" value="Trp_synth_b_CS"/>
</dbReference>
<dbReference type="InterPro" id="IPR006654">
    <property type="entry name" value="Trp_synth_beta"/>
</dbReference>
<dbReference type="InterPro" id="IPR023026">
    <property type="entry name" value="Trp_synth_beta/beta-like"/>
</dbReference>
<dbReference type="InterPro" id="IPR001926">
    <property type="entry name" value="TrpB-like_PALP"/>
</dbReference>
<dbReference type="InterPro" id="IPR036052">
    <property type="entry name" value="TrpB-like_PALP_sf"/>
</dbReference>
<dbReference type="NCBIfam" id="TIGR00263">
    <property type="entry name" value="trpB"/>
    <property type="match status" value="1"/>
</dbReference>
<dbReference type="PANTHER" id="PTHR48077:SF3">
    <property type="entry name" value="TRYPTOPHAN SYNTHASE"/>
    <property type="match status" value="1"/>
</dbReference>
<dbReference type="PANTHER" id="PTHR48077">
    <property type="entry name" value="TRYPTOPHAN SYNTHASE-RELATED"/>
    <property type="match status" value="1"/>
</dbReference>
<dbReference type="Pfam" id="PF00291">
    <property type="entry name" value="PALP"/>
    <property type="match status" value="1"/>
</dbReference>
<dbReference type="PIRSF" id="PIRSF001413">
    <property type="entry name" value="Trp_syn_beta"/>
    <property type="match status" value="1"/>
</dbReference>
<dbReference type="SUPFAM" id="SSF53686">
    <property type="entry name" value="Tryptophan synthase beta subunit-like PLP-dependent enzymes"/>
    <property type="match status" value="1"/>
</dbReference>
<dbReference type="PROSITE" id="PS00168">
    <property type="entry name" value="TRP_SYNTHASE_BETA"/>
    <property type="match status" value="1"/>
</dbReference>
<name>TRPB1_NOSS1</name>
<reference key="1">
    <citation type="journal article" date="2001" name="DNA Res.">
        <title>Complete genomic sequence of the filamentous nitrogen-fixing cyanobacterium Anabaena sp. strain PCC 7120.</title>
        <authorList>
            <person name="Kaneko T."/>
            <person name="Nakamura Y."/>
            <person name="Wolk C.P."/>
            <person name="Kuritz T."/>
            <person name="Sasamoto S."/>
            <person name="Watanabe A."/>
            <person name="Iriguchi M."/>
            <person name="Ishikawa A."/>
            <person name="Kawashima K."/>
            <person name="Kimura T."/>
            <person name="Kishida Y."/>
            <person name="Kohara M."/>
            <person name="Matsumoto M."/>
            <person name="Matsuno A."/>
            <person name="Muraki A."/>
            <person name="Nakazaki N."/>
            <person name="Shimpo S."/>
            <person name="Sugimoto M."/>
            <person name="Takazawa M."/>
            <person name="Yamada M."/>
            <person name="Yasuda M."/>
            <person name="Tabata S."/>
        </authorList>
    </citation>
    <scope>NUCLEOTIDE SEQUENCE [LARGE SCALE GENOMIC DNA]</scope>
    <source>
        <strain>PCC 7120 / SAG 25.82 / UTEX 2576</strain>
    </source>
</reference>
<protein>
    <recommendedName>
        <fullName>Tryptophan synthase beta chain 1</fullName>
        <ecNumber>4.2.1.20</ecNumber>
    </recommendedName>
</protein>
<comment type="function">
    <text evidence="1">The beta subunit is responsible for the synthesis of L-tryptophan from indole and L-serine.</text>
</comment>
<comment type="catalytic activity">
    <reaction>
        <text>(1S,2R)-1-C-(indol-3-yl)glycerol 3-phosphate + L-serine = D-glyceraldehyde 3-phosphate + L-tryptophan + H2O</text>
        <dbReference type="Rhea" id="RHEA:10532"/>
        <dbReference type="ChEBI" id="CHEBI:15377"/>
        <dbReference type="ChEBI" id="CHEBI:33384"/>
        <dbReference type="ChEBI" id="CHEBI:57912"/>
        <dbReference type="ChEBI" id="CHEBI:58866"/>
        <dbReference type="ChEBI" id="CHEBI:59776"/>
        <dbReference type="EC" id="4.2.1.20"/>
    </reaction>
</comment>
<comment type="cofactor">
    <cofactor evidence="1">
        <name>pyridoxal 5'-phosphate</name>
        <dbReference type="ChEBI" id="CHEBI:597326"/>
    </cofactor>
</comment>
<comment type="pathway">
    <text>Amino-acid biosynthesis; L-tryptophan biosynthesis; L-tryptophan from chorismate: step 5/5.</text>
</comment>
<comment type="subunit">
    <text evidence="1">Tetramer of two alpha and two beta chains.</text>
</comment>
<comment type="similarity">
    <text evidence="2">Belongs to the TrpB family.</text>
</comment>
<keyword id="KW-0028">Amino-acid biosynthesis</keyword>
<keyword id="KW-0057">Aromatic amino acid biosynthesis</keyword>
<keyword id="KW-0456">Lyase</keyword>
<keyword id="KW-0663">Pyridoxal phosphate</keyword>
<keyword id="KW-1185">Reference proteome</keyword>
<keyword id="KW-0822">Tryptophan biosynthesis</keyword>
<sequence length="409" mass="44756">MVSTPEIKNQLARPDALGRFGKFGGKYVPETLMPALGELETAYQKYRDDASYQTELQNLLRDYVGRPSPLYFAERLTEYYARPDGTGAQIYLKREDLNHTGAHKINNALAQVLLAKRIGKQRVIAETGAGQHGVATATVCARFGLDCVIYMGIHDMERQALNVFRMKLMGAEVRPVEAGTGTLKDATSEAIRDWVTNVETTHYILGSVAGPHPYPMIVRDFHAIIGKETRVQCQEKWGGLPDILLACVGGGSNAIGLFHEFIDEPSIRLIGVEAAGEGVDTDKHAATLTLGRVGVLHGAMSYLLQDEDGQVIEAHSISAGLDYPGVGPEHSYLKDIRRAEYYSVTDKQALDGFQQLSRLEGIIPALETSHAIAYLETLCPQLNGSPRIVINCSGRGDKDVQTVAKVLNY</sequence>
<proteinExistence type="inferred from homology"/>
<evidence type="ECO:0000250" key="1"/>
<evidence type="ECO:0000305" key="2"/>
<feature type="chain" id="PRO_0000098910" description="Tryptophan synthase beta chain 1">
    <location>
        <begin position="1"/>
        <end position="409"/>
    </location>
</feature>
<feature type="modified residue" description="N6-(pyridoxal phosphate)lysine" evidence="1">
    <location>
        <position position="104"/>
    </location>
</feature>
<gene>
    <name type="primary">trpB1</name>
    <name type="ordered locus">all0410</name>
</gene>